<accession>Q2VEG4</accession>
<keyword id="KW-0150">Chloroplast</keyword>
<keyword id="KW-0249">Electron transport</keyword>
<keyword id="KW-0349">Heme</keyword>
<keyword id="KW-0408">Iron</keyword>
<keyword id="KW-0472">Membrane</keyword>
<keyword id="KW-0479">Metal-binding</keyword>
<keyword id="KW-0602">Photosynthesis</keyword>
<keyword id="KW-0934">Plastid</keyword>
<keyword id="KW-1185">Reference proteome</keyword>
<keyword id="KW-0732">Signal</keyword>
<keyword id="KW-0793">Thylakoid</keyword>
<keyword id="KW-0812">Transmembrane</keyword>
<keyword id="KW-1133">Transmembrane helix</keyword>
<keyword id="KW-0813">Transport</keyword>
<reference key="1">
    <citation type="journal article" date="2006" name="Plant Cell Rep.">
        <title>The complete chloroplast genome sequences of Solanum tuberosum and comparative analysis with Solanaceae species identified the presence of a 241-bp deletion in cultivated potato chloroplast DNA sequence.</title>
        <authorList>
            <person name="Chung H.-J."/>
            <person name="Jung J.D."/>
            <person name="Park H.-W."/>
            <person name="Kim J.-H."/>
            <person name="Cha H.W."/>
            <person name="Min S.R."/>
            <person name="Jeong W.-J."/>
            <person name="Liu J.R."/>
        </authorList>
    </citation>
    <scope>NUCLEOTIDE SEQUENCE [LARGE SCALE GENOMIC DNA]</scope>
    <source>
        <strain>cv. Desiree</strain>
    </source>
</reference>
<reference key="2">
    <citation type="submission" date="2006-02" db="EMBL/GenBank/DDBJ databases">
        <title>Complete chloroplast genome sequences of Solanum tuberosum cultivar Desiree and comparative analyses with other Solanaceae genomes.</title>
        <authorList>
            <person name="Gargano D."/>
            <person name="Scotti N."/>
            <person name="Vezzi A."/>
            <person name="Bilardi A."/>
            <person name="Valle G."/>
            <person name="Grillo S."/>
            <person name="Cardi T."/>
        </authorList>
    </citation>
    <scope>NUCLEOTIDE SEQUENCE [LARGE SCALE GENOMIC DNA]</scope>
    <source>
        <strain>cv. Desiree</strain>
    </source>
</reference>
<geneLocation type="chloroplast"/>
<sequence length="320" mass="35218">MQTRNAFSWLKKQITRSISVSLMIYILTRTSISSAYPIFAQQGYENPREATGRIVCANCHLANKPVEIEVPQAVLPDTVFEAVVRIPYDMQLKQVLANGKKGGLNVGAVLILPEGFELAPPDRISPEMKEKIGNLSFQSYRPNKTNILVVGPVPGKKYSEITFPILSPDPATKKDVHFLKYPIYVGGNRGRGQIYPDGNKSNNTVYNATAAGIVSKIIRKEKGGYEITITDASEGRQVVDIIPPGPELLVSEGESIKFDQPLTSNPNVGGFGQGDAEIVLQDPLRVQGLLFFLASVILAQIFLVLKKKQFEKVQLAEMNF</sequence>
<dbReference type="EMBL" id="DQ231562">
    <property type="protein sequence ID" value="ABB90054.1"/>
    <property type="molecule type" value="Genomic_DNA"/>
</dbReference>
<dbReference type="EMBL" id="DQ386163">
    <property type="protein sequence ID" value="ABD47070.1"/>
    <property type="molecule type" value="Genomic_DNA"/>
</dbReference>
<dbReference type="RefSeq" id="YP_635652.1">
    <property type="nucleotide sequence ID" value="NC_008096.2"/>
</dbReference>
<dbReference type="SMR" id="Q2VEG4"/>
<dbReference type="FunCoup" id="Q2VEG4">
    <property type="interactions" value="373"/>
</dbReference>
<dbReference type="STRING" id="4113.Q2VEG4"/>
<dbReference type="PaxDb" id="4113-PGSC0003DMT400007521"/>
<dbReference type="GeneID" id="4099990"/>
<dbReference type="KEGG" id="sot:4099990"/>
<dbReference type="eggNOG" id="ENOG502QPT8">
    <property type="taxonomic scope" value="Eukaryota"/>
</dbReference>
<dbReference type="InParanoid" id="Q2VEG4"/>
<dbReference type="OrthoDB" id="1251152at2759"/>
<dbReference type="Proteomes" id="UP000011115">
    <property type="component" value="Unassembled WGS sequence"/>
</dbReference>
<dbReference type="ExpressionAtlas" id="Q2VEG4">
    <property type="expression patterns" value="baseline"/>
</dbReference>
<dbReference type="GO" id="GO:0009535">
    <property type="term" value="C:chloroplast thylakoid membrane"/>
    <property type="evidence" value="ECO:0007669"/>
    <property type="project" value="UniProtKB-SubCell"/>
</dbReference>
<dbReference type="GO" id="GO:0009055">
    <property type="term" value="F:electron transfer activity"/>
    <property type="evidence" value="ECO:0007669"/>
    <property type="project" value="UniProtKB-UniRule"/>
</dbReference>
<dbReference type="GO" id="GO:0020037">
    <property type="term" value="F:heme binding"/>
    <property type="evidence" value="ECO:0007669"/>
    <property type="project" value="InterPro"/>
</dbReference>
<dbReference type="GO" id="GO:0005506">
    <property type="term" value="F:iron ion binding"/>
    <property type="evidence" value="ECO:0007669"/>
    <property type="project" value="InterPro"/>
</dbReference>
<dbReference type="GO" id="GO:0015979">
    <property type="term" value="P:photosynthesis"/>
    <property type="evidence" value="ECO:0007669"/>
    <property type="project" value="UniProtKB-UniRule"/>
</dbReference>
<dbReference type="FunFam" id="1.20.5.700:FF:000001">
    <property type="entry name" value="Cytochrome f"/>
    <property type="match status" value="1"/>
</dbReference>
<dbReference type="FunFam" id="2.40.50.100:FF:000007">
    <property type="entry name" value="Cytochrome f"/>
    <property type="match status" value="1"/>
</dbReference>
<dbReference type="FunFam" id="2.60.40.830:FF:000001">
    <property type="entry name" value="Cytochrome f"/>
    <property type="match status" value="1"/>
</dbReference>
<dbReference type="Gene3D" id="2.40.50.100">
    <property type="match status" value="1"/>
</dbReference>
<dbReference type="Gene3D" id="2.60.40.830">
    <property type="entry name" value="Cytochrome f large domain"/>
    <property type="match status" value="1"/>
</dbReference>
<dbReference type="Gene3D" id="1.20.5.700">
    <property type="entry name" value="Single helix bin"/>
    <property type="match status" value="1"/>
</dbReference>
<dbReference type="HAMAP" id="MF_00610">
    <property type="entry name" value="Cytb6_f_cytF"/>
    <property type="match status" value="1"/>
</dbReference>
<dbReference type="InterPro" id="IPR024058">
    <property type="entry name" value="Cyt-f_TM"/>
</dbReference>
<dbReference type="InterPro" id="IPR002325">
    <property type="entry name" value="Cyt_f"/>
</dbReference>
<dbReference type="InterPro" id="IPR024094">
    <property type="entry name" value="Cyt_f_lg_dom"/>
</dbReference>
<dbReference type="InterPro" id="IPR036826">
    <property type="entry name" value="Cyt_f_lg_dom_sf"/>
</dbReference>
<dbReference type="InterPro" id="IPR011054">
    <property type="entry name" value="Rudment_hybrid_motif"/>
</dbReference>
<dbReference type="PANTHER" id="PTHR33288">
    <property type="match status" value="1"/>
</dbReference>
<dbReference type="PANTHER" id="PTHR33288:SF10">
    <property type="entry name" value="CYTOCHROME F"/>
    <property type="match status" value="1"/>
</dbReference>
<dbReference type="Pfam" id="PF01333">
    <property type="entry name" value="Apocytochr_F_C"/>
    <property type="match status" value="1"/>
</dbReference>
<dbReference type="Pfam" id="PF16639">
    <property type="entry name" value="Apocytochr_F_N"/>
    <property type="match status" value="1"/>
</dbReference>
<dbReference type="PRINTS" id="PR00610">
    <property type="entry name" value="CYTOCHROMEF"/>
</dbReference>
<dbReference type="SUPFAM" id="SSF103431">
    <property type="entry name" value="Cytochrome f subunit of the cytochrome b6f complex, transmembrane anchor"/>
    <property type="match status" value="1"/>
</dbReference>
<dbReference type="SUPFAM" id="SSF49441">
    <property type="entry name" value="Cytochrome f, large domain"/>
    <property type="match status" value="1"/>
</dbReference>
<dbReference type="SUPFAM" id="SSF51246">
    <property type="entry name" value="Rudiment single hybrid motif"/>
    <property type="match status" value="1"/>
</dbReference>
<dbReference type="PROSITE" id="PS51010">
    <property type="entry name" value="CYTF"/>
    <property type="match status" value="1"/>
</dbReference>
<protein>
    <recommendedName>
        <fullName evidence="2">Cytochrome f</fullName>
    </recommendedName>
</protein>
<gene>
    <name evidence="2" type="primary">petA</name>
</gene>
<evidence type="ECO:0000250" key="1"/>
<evidence type="ECO:0000255" key="2">
    <source>
        <dbReference type="HAMAP-Rule" id="MF_00610"/>
    </source>
</evidence>
<proteinExistence type="inferred from homology"/>
<comment type="function">
    <text evidence="2">Component of the cytochrome b6-f complex, which mediates electron transfer between photosystem II (PSII) and photosystem I (PSI), cyclic electron flow around PSI, and state transitions.</text>
</comment>
<comment type="cofactor">
    <cofactor evidence="2">
        <name>heme</name>
        <dbReference type="ChEBI" id="CHEBI:30413"/>
    </cofactor>
    <text evidence="2">Binds 1 heme group covalently.</text>
</comment>
<comment type="subunit">
    <text evidence="1">The 4 large subunits of the cytochrome b6-f complex are cytochrome b6, subunit IV (17 kDa polypeptide, petD), cytochrome f and the Rieske protein, while the 4 small subunits are PetG, PetL, PetM and PetN. The complex functions as a dimer (By similarity).</text>
</comment>
<comment type="subcellular location">
    <subcellularLocation>
        <location evidence="2">Plastid</location>
        <location evidence="2">Chloroplast thylakoid membrane</location>
        <topology evidence="2">Single-pass membrane protein</topology>
    </subcellularLocation>
</comment>
<comment type="similarity">
    <text evidence="2">Belongs to the cytochrome f family.</text>
</comment>
<organism>
    <name type="scientific">Solanum tuberosum</name>
    <name type="common">Potato</name>
    <dbReference type="NCBI Taxonomy" id="4113"/>
    <lineage>
        <taxon>Eukaryota</taxon>
        <taxon>Viridiplantae</taxon>
        <taxon>Streptophyta</taxon>
        <taxon>Embryophyta</taxon>
        <taxon>Tracheophyta</taxon>
        <taxon>Spermatophyta</taxon>
        <taxon>Magnoliopsida</taxon>
        <taxon>eudicotyledons</taxon>
        <taxon>Gunneridae</taxon>
        <taxon>Pentapetalae</taxon>
        <taxon>asterids</taxon>
        <taxon>lamiids</taxon>
        <taxon>Solanales</taxon>
        <taxon>Solanaceae</taxon>
        <taxon>Solanoideae</taxon>
        <taxon>Solaneae</taxon>
        <taxon>Solanum</taxon>
    </lineage>
</organism>
<name>CYF_SOLTU</name>
<feature type="signal peptide" evidence="2">
    <location>
        <begin position="1"/>
        <end position="35"/>
    </location>
</feature>
<feature type="chain" id="PRO_0000275453" description="Cytochrome f">
    <location>
        <begin position="36"/>
        <end position="320"/>
    </location>
</feature>
<feature type="transmembrane region" description="Helical" evidence="2">
    <location>
        <begin position="286"/>
        <end position="306"/>
    </location>
</feature>
<feature type="binding site" description="axial binding residue" evidence="2">
    <location>
        <position position="36"/>
    </location>
    <ligand>
        <name>heme</name>
        <dbReference type="ChEBI" id="CHEBI:30413"/>
    </ligand>
    <ligandPart>
        <name>Fe</name>
        <dbReference type="ChEBI" id="CHEBI:18248"/>
    </ligandPart>
</feature>
<feature type="binding site" description="covalent" evidence="2">
    <location>
        <position position="56"/>
    </location>
    <ligand>
        <name>heme</name>
        <dbReference type="ChEBI" id="CHEBI:30413"/>
    </ligand>
</feature>
<feature type="binding site" description="covalent" evidence="2">
    <location>
        <position position="59"/>
    </location>
    <ligand>
        <name>heme</name>
        <dbReference type="ChEBI" id="CHEBI:30413"/>
    </ligand>
</feature>
<feature type="binding site" description="axial binding residue" evidence="2">
    <location>
        <position position="60"/>
    </location>
    <ligand>
        <name>heme</name>
        <dbReference type="ChEBI" id="CHEBI:30413"/>
    </ligand>
    <ligandPart>
        <name>Fe</name>
        <dbReference type="ChEBI" id="CHEBI:18248"/>
    </ligandPart>
</feature>